<proteinExistence type="inferred from homology"/>
<sequence length="460" mass="51830">MENFWQACSAQLEQELTPQQYSAWIKPLTPLDYEDGTLRIAAPNRFKLDWVKTQFASRITSIAAQFWEVPVEVQFVLDPRLVAARRPAAQASVVSDRADDVPSNVLEPIPSNATDHTPRRDQSRINTALTFDSFVTGKANQLARAAAIQVANNPGSSYNPLFLYGGVGLGKTHLIHAIGNQVLADNPNVKIRYIHAEQYVRDVVTAYQRKGFDDFKRYYHSLDLLLIDDIQFFGGKSRTQEEFFYAFEALIAAKKQIIITSDTYPKEITGMDDRLISRFDSGLTVAVEPPELEMRVAILLKKAVQEGVTFSDDVAFFVAKHLRSNVRELEGALRKILAYSRFHGKDITIEVVKDALKDLLSVQNRQISVENIQKTVADFFNIKVADMYSKKRPANIARPRQIAMYLAKELTQKSLPEIGELFGGRDHTTVLHAVRKIAADRGKSPECNHELHVLEQTLKG</sequence>
<feature type="chain" id="PRO_1000048656" description="Chromosomal replication initiator protein DnaA">
    <location>
        <begin position="1"/>
        <end position="460"/>
    </location>
</feature>
<feature type="region of interest" description="Domain I, interacts with DnaA modulators" evidence="1">
    <location>
        <begin position="1"/>
        <end position="78"/>
    </location>
</feature>
<feature type="region of interest" description="Domain II" evidence="1">
    <location>
        <begin position="78"/>
        <end position="123"/>
    </location>
</feature>
<feature type="region of interest" description="Domain III, AAA+ region" evidence="1">
    <location>
        <begin position="124"/>
        <end position="340"/>
    </location>
</feature>
<feature type="region of interest" description="Domain IV, binds dsDNA" evidence="1">
    <location>
        <begin position="341"/>
        <end position="460"/>
    </location>
</feature>
<feature type="binding site" evidence="1">
    <location>
        <position position="168"/>
    </location>
    <ligand>
        <name>ATP</name>
        <dbReference type="ChEBI" id="CHEBI:30616"/>
    </ligand>
</feature>
<feature type="binding site" evidence="1">
    <location>
        <position position="170"/>
    </location>
    <ligand>
        <name>ATP</name>
        <dbReference type="ChEBI" id="CHEBI:30616"/>
    </ligand>
</feature>
<feature type="binding site" evidence="1">
    <location>
        <position position="171"/>
    </location>
    <ligand>
        <name>ATP</name>
        <dbReference type="ChEBI" id="CHEBI:30616"/>
    </ligand>
</feature>
<feature type="binding site" evidence="1">
    <location>
        <position position="172"/>
    </location>
    <ligand>
        <name>ATP</name>
        <dbReference type="ChEBI" id="CHEBI:30616"/>
    </ligand>
</feature>
<evidence type="ECO:0000255" key="1">
    <source>
        <dbReference type="HAMAP-Rule" id="MF_00377"/>
    </source>
</evidence>
<reference key="1">
    <citation type="journal article" date="2007" name="PLoS Genet.">
        <title>A tale of two oxidation states: bacterial colonization of arsenic-rich environments.</title>
        <authorList>
            <person name="Muller D."/>
            <person name="Medigue C."/>
            <person name="Koechler S."/>
            <person name="Barbe V."/>
            <person name="Barakat M."/>
            <person name="Talla E."/>
            <person name="Bonnefoy V."/>
            <person name="Krin E."/>
            <person name="Arsene-Ploetze F."/>
            <person name="Carapito C."/>
            <person name="Chandler M."/>
            <person name="Cournoyer B."/>
            <person name="Cruveiller S."/>
            <person name="Dossat C."/>
            <person name="Duval S."/>
            <person name="Heymann M."/>
            <person name="Leize E."/>
            <person name="Lieutaud A."/>
            <person name="Lievremont D."/>
            <person name="Makita Y."/>
            <person name="Mangenot S."/>
            <person name="Nitschke W."/>
            <person name="Ortet P."/>
            <person name="Perdrial N."/>
            <person name="Schoepp B."/>
            <person name="Siguier P."/>
            <person name="Simeonova D.D."/>
            <person name="Rouy Z."/>
            <person name="Segurens B."/>
            <person name="Turlin E."/>
            <person name="Vallenet D."/>
            <person name="van Dorsselaer A."/>
            <person name="Weiss S."/>
            <person name="Weissenbach J."/>
            <person name="Lett M.-C."/>
            <person name="Danchin A."/>
            <person name="Bertin P.N."/>
        </authorList>
    </citation>
    <scope>NUCLEOTIDE SEQUENCE [LARGE SCALE GENOMIC DNA]</scope>
    <source>
        <strain>ULPAs1</strain>
    </source>
</reference>
<organism>
    <name type="scientific">Herminiimonas arsenicoxydans</name>
    <dbReference type="NCBI Taxonomy" id="204773"/>
    <lineage>
        <taxon>Bacteria</taxon>
        <taxon>Pseudomonadati</taxon>
        <taxon>Pseudomonadota</taxon>
        <taxon>Betaproteobacteria</taxon>
        <taxon>Burkholderiales</taxon>
        <taxon>Oxalobacteraceae</taxon>
        <taxon>Herminiimonas</taxon>
    </lineage>
</organism>
<name>DNAA_HERAR</name>
<gene>
    <name evidence="1" type="primary">dnaA</name>
    <name type="ordered locus">HEAR0001</name>
</gene>
<protein>
    <recommendedName>
        <fullName evidence="1">Chromosomal replication initiator protein DnaA</fullName>
    </recommendedName>
</protein>
<keyword id="KW-0067">ATP-binding</keyword>
<keyword id="KW-0963">Cytoplasm</keyword>
<keyword id="KW-0235">DNA replication</keyword>
<keyword id="KW-0238">DNA-binding</keyword>
<keyword id="KW-0446">Lipid-binding</keyword>
<keyword id="KW-0547">Nucleotide-binding</keyword>
<keyword id="KW-1185">Reference proteome</keyword>
<comment type="function">
    <text evidence="1">Plays an essential role in the initiation and regulation of chromosomal replication. ATP-DnaA binds to the origin of replication (oriC) to initiate formation of the DNA replication initiation complex once per cell cycle. Binds the DnaA box (a 9 base pair repeat at the origin) and separates the double-stranded (ds)DNA. Forms a right-handed helical filament on oriC DNA; dsDNA binds to the exterior of the filament while single-stranded (ss)DNA is stabiized in the filament's interior. The ATP-DnaA-oriC complex binds and stabilizes one strand of the AT-rich DNA unwinding element (DUE), permitting loading of DNA polymerase. After initiation quickly degrades to an ADP-DnaA complex that is not apt for DNA replication. Binds acidic phospholipids.</text>
</comment>
<comment type="subunit">
    <text evidence="1">Oligomerizes as a right-handed, spiral filament on DNA at oriC.</text>
</comment>
<comment type="subcellular location">
    <subcellularLocation>
        <location evidence="1">Cytoplasm</location>
    </subcellularLocation>
</comment>
<comment type="domain">
    <text evidence="1">Domain I is involved in oligomerization and binding regulators, domain II is flexibile and of varying length in different bacteria, domain III forms the AAA+ region, while domain IV binds dsDNA.</text>
</comment>
<comment type="similarity">
    <text evidence="1">Belongs to the DnaA family.</text>
</comment>
<accession>A4G154</accession>
<dbReference type="EMBL" id="CU207211">
    <property type="protein sequence ID" value="CAL60241.1"/>
    <property type="molecule type" value="Genomic_DNA"/>
</dbReference>
<dbReference type="SMR" id="A4G154"/>
<dbReference type="STRING" id="204773.HEAR0001"/>
<dbReference type="KEGG" id="har:HEAR0001"/>
<dbReference type="eggNOG" id="COG0593">
    <property type="taxonomic scope" value="Bacteria"/>
</dbReference>
<dbReference type="HOGENOM" id="CLU_026910_0_1_4"/>
<dbReference type="OrthoDB" id="9807019at2"/>
<dbReference type="Proteomes" id="UP000006697">
    <property type="component" value="Chromosome"/>
</dbReference>
<dbReference type="GO" id="GO:0005737">
    <property type="term" value="C:cytoplasm"/>
    <property type="evidence" value="ECO:0007669"/>
    <property type="project" value="UniProtKB-SubCell"/>
</dbReference>
<dbReference type="GO" id="GO:0005886">
    <property type="term" value="C:plasma membrane"/>
    <property type="evidence" value="ECO:0007669"/>
    <property type="project" value="TreeGrafter"/>
</dbReference>
<dbReference type="GO" id="GO:0005524">
    <property type="term" value="F:ATP binding"/>
    <property type="evidence" value="ECO:0007669"/>
    <property type="project" value="UniProtKB-UniRule"/>
</dbReference>
<dbReference type="GO" id="GO:0016887">
    <property type="term" value="F:ATP hydrolysis activity"/>
    <property type="evidence" value="ECO:0007669"/>
    <property type="project" value="InterPro"/>
</dbReference>
<dbReference type="GO" id="GO:0003688">
    <property type="term" value="F:DNA replication origin binding"/>
    <property type="evidence" value="ECO:0007669"/>
    <property type="project" value="UniProtKB-UniRule"/>
</dbReference>
<dbReference type="GO" id="GO:0008289">
    <property type="term" value="F:lipid binding"/>
    <property type="evidence" value="ECO:0007669"/>
    <property type="project" value="UniProtKB-KW"/>
</dbReference>
<dbReference type="GO" id="GO:0006270">
    <property type="term" value="P:DNA replication initiation"/>
    <property type="evidence" value="ECO:0007669"/>
    <property type="project" value="UniProtKB-UniRule"/>
</dbReference>
<dbReference type="GO" id="GO:0006275">
    <property type="term" value="P:regulation of DNA replication"/>
    <property type="evidence" value="ECO:0007669"/>
    <property type="project" value="UniProtKB-UniRule"/>
</dbReference>
<dbReference type="CDD" id="cd00009">
    <property type="entry name" value="AAA"/>
    <property type="match status" value="1"/>
</dbReference>
<dbReference type="CDD" id="cd06571">
    <property type="entry name" value="Bac_DnaA_C"/>
    <property type="match status" value="1"/>
</dbReference>
<dbReference type="FunFam" id="1.10.8.60:FF:000003">
    <property type="entry name" value="Chromosomal replication initiator protein DnaA"/>
    <property type="match status" value="1"/>
</dbReference>
<dbReference type="FunFam" id="3.40.50.300:FF:000668">
    <property type="entry name" value="Chromosomal replication initiator protein DnaA"/>
    <property type="match status" value="1"/>
</dbReference>
<dbReference type="Gene3D" id="1.10.1750.10">
    <property type="match status" value="1"/>
</dbReference>
<dbReference type="Gene3D" id="1.10.8.60">
    <property type="match status" value="1"/>
</dbReference>
<dbReference type="Gene3D" id="3.30.300.180">
    <property type="match status" value="1"/>
</dbReference>
<dbReference type="Gene3D" id="3.40.50.300">
    <property type="entry name" value="P-loop containing nucleotide triphosphate hydrolases"/>
    <property type="match status" value="1"/>
</dbReference>
<dbReference type="HAMAP" id="MF_00377">
    <property type="entry name" value="DnaA_bact"/>
    <property type="match status" value="1"/>
</dbReference>
<dbReference type="InterPro" id="IPR003593">
    <property type="entry name" value="AAA+_ATPase"/>
</dbReference>
<dbReference type="InterPro" id="IPR001957">
    <property type="entry name" value="Chromosome_initiator_DnaA"/>
</dbReference>
<dbReference type="InterPro" id="IPR020591">
    <property type="entry name" value="Chromosome_initiator_DnaA-like"/>
</dbReference>
<dbReference type="InterPro" id="IPR018312">
    <property type="entry name" value="Chromosome_initiator_DnaA_CS"/>
</dbReference>
<dbReference type="InterPro" id="IPR013159">
    <property type="entry name" value="DnaA_C"/>
</dbReference>
<dbReference type="InterPro" id="IPR013317">
    <property type="entry name" value="DnaA_dom"/>
</dbReference>
<dbReference type="InterPro" id="IPR024633">
    <property type="entry name" value="DnaA_N_dom"/>
</dbReference>
<dbReference type="InterPro" id="IPR038454">
    <property type="entry name" value="DnaA_N_sf"/>
</dbReference>
<dbReference type="InterPro" id="IPR027417">
    <property type="entry name" value="P-loop_NTPase"/>
</dbReference>
<dbReference type="InterPro" id="IPR010921">
    <property type="entry name" value="Trp_repressor/repl_initiator"/>
</dbReference>
<dbReference type="NCBIfam" id="TIGR00362">
    <property type="entry name" value="DnaA"/>
    <property type="match status" value="1"/>
</dbReference>
<dbReference type="PANTHER" id="PTHR30050">
    <property type="entry name" value="CHROMOSOMAL REPLICATION INITIATOR PROTEIN DNAA"/>
    <property type="match status" value="1"/>
</dbReference>
<dbReference type="PANTHER" id="PTHR30050:SF2">
    <property type="entry name" value="CHROMOSOMAL REPLICATION INITIATOR PROTEIN DNAA"/>
    <property type="match status" value="1"/>
</dbReference>
<dbReference type="Pfam" id="PF00308">
    <property type="entry name" value="Bac_DnaA"/>
    <property type="match status" value="1"/>
</dbReference>
<dbReference type="Pfam" id="PF08299">
    <property type="entry name" value="Bac_DnaA_C"/>
    <property type="match status" value="1"/>
</dbReference>
<dbReference type="Pfam" id="PF11638">
    <property type="entry name" value="DnaA_N"/>
    <property type="match status" value="1"/>
</dbReference>
<dbReference type="PRINTS" id="PR00051">
    <property type="entry name" value="DNAA"/>
</dbReference>
<dbReference type="SMART" id="SM00382">
    <property type="entry name" value="AAA"/>
    <property type="match status" value="1"/>
</dbReference>
<dbReference type="SMART" id="SM00760">
    <property type="entry name" value="Bac_DnaA_C"/>
    <property type="match status" value="1"/>
</dbReference>
<dbReference type="SUPFAM" id="SSF52540">
    <property type="entry name" value="P-loop containing nucleoside triphosphate hydrolases"/>
    <property type="match status" value="1"/>
</dbReference>
<dbReference type="SUPFAM" id="SSF48295">
    <property type="entry name" value="TrpR-like"/>
    <property type="match status" value="1"/>
</dbReference>
<dbReference type="PROSITE" id="PS01008">
    <property type="entry name" value="DNAA"/>
    <property type="match status" value="1"/>
</dbReference>